<keyword id="KW-0067">ATP-binding</keyword>
<keyword id="KW-1003">Cell membrane</keyword>
<keyword id="KW-0325">Glycoprotein</keyword>
<keyword id="KW-0472">Membrane</keyword>
<keyword id="KW-0547">Nucleotide-binding</keyword>
<keyword id="KW-0677">Repeat</keyword>
<keyword id="KW-0812">Transmembrane</keyword>
<keyword id="KW-1133">Transmembrane helix</keyword>
<keyword id="KW-0813">Transport</keyword>
<reference key="1">
    <citation type="journal article" date="2012" name="MBio">
        <title>Comparative genome analysis of Trichophyton rubrum and related dermatophytes reveals candidate genes involved in infection.</title>
        <authorList>
            <person name="Martinez D.A."/>
            <person name="Oliver B.G."/>
            <person name="Graeser Y."/>
            <person name="Goldberg J.M."/>
            <person name="Li W."/>
            <person name="Martinez-Rossi N.M."/>
            <person name="Monod M."/>
            <person name="Shelest E."/>
            <person name="Barton R.C."/>
            <person name="Birch E."/>
            <person name="Brakhage A.A."/>
            <person name="Chen Z."/>
            <person name="Gurr S.J."/>
            <person name="Heiman D."/>
            <person name="Heitman J."/>
            <person name="Kosti I."/>
            <person name="Rossi A."/>
            <person name="Saif S."/>
            <person name="Samalova M."/>
            <person name="Saunders C.W."/>
            <person name="Shea T."/>
            <person name="Summerbell R.C."/>
            <person name="Xu J."/>
            <person name="Young S."/>
            <person name="Zeng Q."/>
            <person name="Birren B.W."/>
            <person name="Cuomo C.A."/>
            <person name="White T.C."/>
        </authorList>
    </citation>
    <scope>NUCLEOTIDE SEQUENCE [LARGE SCALE GENOMIC DNA]</scope>
    <source>
        <strain>CBS 112818</strain>
    </source>
</reference>
<reference key="2">
    <citation type="journal article" date="2016" name="J. Med. Microbiol.">
        <title>Compensatory expression of multidrug-resistance genes encoding ABC transporters in dermatophytes.</title>
        <authorList>
            <person name="Martins M.P."/>
            <person name="Franceschini A.C.C."/>
            <person name="Jacob T.R."/>
            <person name="Rossi A."/>
            <person name="Martinez-Rossi N.M."/>
        </authorList>
    </citation>
    <scope>INDUCTION</scope>
</reference>
<proteinExistence type="evidence at transcript level"/>
<comment type="function">
    <text evidence="1">Pleiotropic ABC efflux transporter that may be involved in the modulation susceptibility to a wide range of unrelated cytotoxic compounds.</text>
</comment>
<comment type="catalytic activity">
    <reaction evidence="2">
        <text>itraconazole(in) + ATP + H2O = itraconazole(out) + ADP + phosphate + H(+)</text>
        <dbReference type="Rhea" id="RHEA:33503"/>
        <dbReference type="ChEBI" id="CHEBI:6076"/>
        <dbReference type="ChEBI" id="CHEBI:15377"/>
        <dbReference type="ChEBI" id="CHEBI:15378"/>
        <dbReference type="ChEBI" id="CHEBI:30616"/>
        <dbReference type="ChEBI" id="CHEBI:43474"/>
        <dbReference type="ChEBI" id="CHEBI:456216"/>
    </reaction>
    <physiologicalReaction direction="left-to-right" evidence="2">
        <dbReference type="Rhea" id="RHEA:33504"/>
    </physiologicalReaction>
</comment>
<comment type="subcellular location">
    <subcellularLocation>
        <location evidence="10">Cell membrane</location>
        <topology evidence="3">Multi-pass membrane protein</topology>
    </subcellularLocation>
</comment>
<comment type="induction">
    <text evidence="8">Expression is induced upon exposure to amphotericin B, griseofulvin, the allylamine terbinafine, and the azole itraconazole.</text>
</comment>
<comment type="similarity">
    <text evidence="10">Belongs to the ABC transporter superfamily. ABCB family. Multidrug resistance exporter (TC 3.A.1.201) subfamily.</text>
</comment>
<feature type="chain" id="PRO_0000447180" description="ABC multidrug transporter MDR2">
    <location>
        <begin position="1"/>
        <end position="1331"/>
    </location>
</feature>
<feature type="transmembrane region" description="Helical" evidence="3 5">
    <location>
        <begin position="93"/>
        <end position="113"/>
    </location>
</feature>
<feature type="transmembrane region" description="Helical" evidence="3 5">
    <location>
        <begin position="147"/>
        <end position="167"/>
    </location>
</feature>
<feature type="transmembrane region" description="Helical" evidence="3 5">
    <location>
        <begin position="219"/>
        <end position="239"/>
    </location>
</feature>
<feature type="transmembrane region" description="Helical" evidence="3 5">
    <location>
        <begin position="242"/>
        <end position="262"/>
    </location>
</feature>
<feature type="transmembrane region" description="Helical" evidence="3 5">
    <location>
        <begin position="325"/>
        <end position="345"/>
    </location>
</feature>
<feature type="transmembrane region" description="Helical" evidence="3 5">
    <location>
        <begin position="358"/>
        <end position="378"/>
    </location>
</feature>
<feature type="transmembrane region" description="Helical" evidence="3 5">
    <location>
        <begin position="762"/>
        <end position="782"/>
    </location>
</feature>
<feature type="transmembrane region" description="Helical" evidence="3 5">
    <location>
        <begin position="810"/>
        <end position="830"/>
    </location>
</feature>
<feature type="transmembrane region" description="Helical" evidence="3 5">
    <location>
        <begin position="884"/>
        <end position="904"/>
    </location>
</feature>
<feature type="transmembrane region" description="Helical" evidence="3 5">
    <location>
        <begin position="910"/>
        <end position="930"/>
    </location>
</feature>
<feature type="transmembrane region" description="Helical" evidence="3 5">
    <location>
        <begin position="995"/>
        <end position="1015"/>
    </location>
</feature>
<feature type="transmembrane region" description="Helical" evidence="3 5">
    <location>
        <begin position="1025"/>
        <end position="1045"/>
    </location>
</feature>
<feature type="domain" description="ABC transmembrane type-1 1" evidence="5">
    <location>
        <begin position="97"/>
        <end position="387"/>
    </location>
</feature>
<feature type="domain" description="ABC transporter 1" evidence="4">
    <location>
        <begin position="422"/>
        <end position="667"/>
    </location>
</feature>
<feature type="domain" description="ABC transmembrane type-1 2" evidence="5">
    <location>
        <begin position="764"/>
        <end position="1051"/>
    </location>
</feature>
<feature type="domain" description="ABC transporter 2" evidence="4">
    <location>
        <begin position="1086"/>
        <end position="1324"/>
    </location>
</feature>
<feature type="region of interest" description="Disordered" evidence="7">
    <location>
        <begin position="1"/>
        <end position="51"/>
    </location>
</feature>
<feature type="compositionally biased region" description="Basic and acidic residues" evidence="7">
    <location>
        <begin position="1"/>
        <end position="20"/>
    </location>
</feature>
<feature type="compositionally biased region" description="Basic and acidic residues" evidence="7">
    <location>
        <begin position="31"/>
        <end position="41"/>
    </location>
</feature>
<feature type="binding site" evidence="4">
    <location>
        <begin position="457"/>
        <end position="464"/>
    </location>
    <ligand>
        <name>ATP</name>
        <dbReference type="ChEBI" id="CHEBI:30616"/>
    </ligand>
</feature>
<feature type="binding site" evidence="4">
    <location>
        <begin position="1121"/>
        <end position="1128"/>
    </location>
    <ligand>
        <name>ATP</name>
        <dbReference type="ChEBI" id="CHEBI:30616"/>
    </ligand>
</feature>
<feature type="glycosylation site" description="N-linked (GlcNAc...) asparagine" evidence="6">
    <location>
        <position position="293"/>
    </location>
</feature>
<feature type="glycosylation site" description="N-linked (GlcNAc...) asparagine" evidence="6">
    <location>
        <position position="529"/>
    </location>
</feature>
<feature type="glycosylation site" description="N-linked (GlcNAc...) asparagine" evidence="6">
    <location>
        <position position="737"/>
    </location>
</feature>
<feature type="glycosylation site" description="N-linked (GlcNAc...) asparagine" evidence="6">
    <location>
        <position position="860"/>
    </location>
</feature>
<feature type="glycosylation site" description="N-linked (GlcNAc...) asparagine" evidence="6">
    <location>
        <position position="1108"/>
    </location>
</feature>
<organism>
    <name type="scientific">Trichophyton tonsurans (strain CBS 112818)</name>
    <name type="common">Scalp ringworm fungus</name>
    <dbReference type="NCBI Taxonomy" id="647933"/>
    <lineage>
        <taxon>Eukaryota</taxon>
        <taxon>Fungi</taxon>
        <taxon>Dikarya</taxon>
        <taxon>Ascomycota</taxon>
        <taxon>Pezizomycotina</taxon>
        <taxon>Eurotiomycetes</taxon>
        <taxon>Eurotiomycetidae</taxon>
        <taxon>Onygenales</taxon>
        <taxon>Arthrodermataceae</taxon>
        <taxon>Trichophyton</taxon>
    </lineage>
</organism>
<evidence type="ECO:0000250" key="1">
    <source>
        <dbReference type="UniProtKB" id="A0A059JJ46"/>
    </source>
</evidence>
<evidence type="ECO:0000250" key="2">
    <source>
        <dbReference type="UniProtKB" id="F2T1C4"/>
    </source>
</evidence>
<evidence type="ECO:0000255" key="3"/>
<evidence type="ECO:0000255" key="4">
    <source>
        <dbReference type="PROSITE-ProRule" id="PRU00434"/>
    </source>
</evidence>
<evidence type="ECO:0000255" key="5">
    <source>
        <dbReference type="PROSITE-ProRule" id="PRU00441"/>
    </source>
</evidence>
<evidence type="ECO:0000255" key="6">
    <source>
        <dbReference type="PROSITE-ProRule" id="PRU00498"/>
    </source>
</evidence>
<evidence type="ECO:0000256" key="7">
    <source>
        <dbReference type="SAM" id="MobiDB-lite"/>
    </source>
</evidence>
<evidence type="ECO:0000269" key="8">
    <source>
    </source>
</evidence>
<evidence type="ECO:0000303" key="9">
    <source>
    </source>
</evidence>
<evidence type="ECO:0000305" key="10"/>
<gene>
    <name evidence="9" type="primary">MDR2</name>
    <name type="ORF">TESG_00664</name>
</gene>
<name>MDR2_TRIT1</name>
<sequence>MVEVSEKPNTQDDGVSKQENRNPASSSSSTSDKEKVAKKGNSDATKSSTPEDLDAQLAHLPEHEREILKQQLFIPDVKATYGTLFRYATRNDMIFLAIVSLASIAAGAALPLFTVLFGSLAGTFRDIALHRITYDEFNSILTRNSLYFVYLGIAQFILLYVSTVGFIYVGEHITQKIRAKYLHAILRQNIGFFDKLGAGEVTTRITADTNLIQDGISEKVGLTLTALSTFFSAFIIGYVRYWKLALICSSTIVAMILVMGGISRFVVKSGRMTLVSYGEGGTVAEEVISSIRNATAFGTQEKLARQYEVHLKEARKWGRRLQMMLGIMFGSMMAIMYSNYGLGFWMGSRFLVGGETDLSAIVNILLAIVIGSFSIGNVAPNTQAFASAISAGAKIFSTIDRVSAIDPGSDEGDTIENVEGTIEFRGIKHIYPSRPEVVVMEDINLVVPKGKTTALVGPSGSGKSTVVGLLERFYNPVSGSVLLDGRDIKTLNLRWLRQQISLVSQEPTLFGTTIFENIRLGLIGSPMENESEEQIKERIVSAAKEANAHDFIMGLPDGYATDVGQRGFLLSGGQKQRIAIARAIVSDPKILLLDEATSALDTKSEGVVQAALDAASRGRTTIVIAHRLSTIKSADNIVVIVGGRIAEQGTHDELVDKKGTYLQLVEAQKINEERGEESEDEAVLEKEKEISRQISVPAKSVNSGKYPDEDVEANLGRIDTKKSLSSVILSQKRSQENETEYSLGTLIRFIAGFNKPERLIMLCGFFFAVLSGAGQPVQSVFFAKGITTLSLPPSLYGKLREDANFWSLMFLMLGLVQLVTQSAQGVIFAICSESLIYRARSKSFRAMLRQDIAFFDLPENSTGALTSFLSTETKHLSGVSGATLGTILMVSTTLIVALTVALAFGWKLALVCISTVPVLLLCGFYRFWILAQFQTRAKKAYESSASYACEATSSIRTVASLTREQGVMEIYEGQLNDQAKKSLRSVAKSSLLYAASQSFSFFCLALGFWYGGGLLGKGEYNAFQFFLCISCVIFGSQSAGIVFSFSPDMGKAKSAAADFKRLFDRVPTIDIESPDGEKLETVEGTIEFRDVHFRYPTRPEQPVLRGLNLTVKPGQYIALVGPSGCGKSTTIALVERFYDTLSGGVYIDGKDISRLNVNSYRSHLALVSQEPTLYQGTIRDNVLLGVDRDELPDEQVFAACKAANIYDFIMSLPDGFGTVVGSKGSMLSGGQKQRIAIARALIRDPKVLLLDEATSALDSESEKVVQAALDAAAKGRTTIAVAHRLSTIQKADIIYVFDQGRIVESGTHHELLQNKGRYYELVHMQSLEKTQ</sequence>
<accession>F2RP52</accession>
<protein>
    <recommendedName>
        <fullName evidence="9">ABC multidrug transporter MDR2</fullName>
    </recommendedName>
    <alternativeName>
        <fullName evidence="9">Multidrug resistance protein 2</fullName>
    </alternativeName>
</protein>
<dbReference type="EMBL" id="GG698478">
    <property type="protein sequence ID" value="EGD93108.1"/>
    <property type="molecule type" value="Genomic_DNA"/>
</dbReference>
<dbReference type="SMR" id="F2RP52"/>
<dbReference type="GlyCosmos" id="F2RP52">
    <property type="glycosylation" value="5 sites, No reported glycans"/>
</dbReference>
<dbReference type="HOGENOM" id="CLU_000604_17_2_1"/>
<dbReference type="OrthoDB" id="2842at34384"/>
<dbReference type="Proteomes" id="UP000009172">
    <property type="component" value="Unassembled WGS sequence"/>
</dbReference>
<dbReference type="GO" id="GO:0005743">
    <property type="term" value="C:mitochondrial inner membrane"/>
    <property type="evidence" value="ECO:0007669"/>
    <property type="project" value="TreeGrafter"/>
</dbReference>
<dbReference type="GO" id="GO:0005886">
    <property type="term" value="C:plasma membrane"/>
    <property type="evidence" value="ECO:0007669"/>
    <property type="project" value="UniProtKB-SubCell"/>
</dbReference>
<dbReference type="GO" id="GO:0015421">
    <property type="term" value="F:ABC-type oligopeptide transporter activity"/>
    <property type="evidence" value="ECO:0007669"/>
    <property type="project" value="TreeGrafter"/>
</dbReference>
<dbReference type="GO" id="GO:0005524">
    <property type="term" value="F:ATP binding"/>
    <property type="evidence" value="ECO:0007669"/>
    <property type="project" value="UniProtKB-KW"/>
</dbReference>
<dbReference type="GO" id="GO:0016887">
    <property type="term" value="F:ATP hydrolysis activity"/>
    <property type="evidence" value="ECO:0007669"/>
    <property type="project" value="InterPro"/>
</dbReference>
<dbReference type="GO" id="GO:0090374">
    <property type="term" value="P:oligopeptide export from mitochondrion"/>
    <property type="evidence" value="ECO:0007669"/>
    <property type="project" value="TreeGrafter"/>
</dbReference>
<dbReference type="CDD" id="cd18577">
    <property type="entry name" value="ABC_6TM_Pgp_ABCB1_D1_like"/>
    <property type="match status" value="1"/>
</dbReference>
<dbReference type="CDD" id="cd18578">
    <property type="entry name" value="ABC_6TM_Pgp_ABCB1_D2_like"/>
    <property type="match status" value="1"/>
</dbReference>
<dbReference type="CDD" id="cd03249">
    <property type="entry name" value="ABC_MTABC3_MDL1_MDL2"/>
    <property type="match status" value="2"/>
</dbReference>
<dbReference type="FunFam" id="1.20.1560.10:FF:000102">
    <property type="entry name" value="ABC multidrug transporter Mdr1"/>
    <property type="match status" value="1"/>
</dbReference>
<dbReference type="FunFam" id="1.20.1560.10:FF:000009">
    <property type="entry name" value="ABC transporter B family member 1"/>
    <property type="match status" value="1"/>
</dbReference>
<dbReference type="FunFam" id="3.40.50.300:FF:000251">
    <property type="entry name" value="ABC transporter B family member 19"/>
    <property type="match status" value="1"/>
</dbReference>
<dbReference type="FunFam" id="3.40.50.300:FF:000302">
    <property type="entry name" value="ATP-binding cassette subfamily B member 5"/>
    <property type="match status" value="1"/>
</dbReference>
<dbReference type="Gene3D" id="1.20.1560.10">
    <property type="entry name" value="ABC transporter type 1, transmembrane domain"/>
    <property type="match status" value="1"/>
</dbReference>
<dbReference type="Gene3D" id="3.40.50.300">
    <property type="entry name" value="P-loop containing nucleotide triphosphate hydrolases"/>
    <property type="match status" value="2"/>
</dbReference>
<dbReference type="InterPro" id="IPR003593">
    <property type="entry name" value="AAA+_ATPase"/>
</dbReference>
<dbReference type="InterPro" id="IPR011527">
    <property type="entry name" value="ABC1_TM_dom"/>
</dbReference>
<dbReference type="InterPro" id="IPR036640">
    <property type="entry name" value="ABC1_TM_sf"/>
</dbReference>
<dbReference type="InterPro" id="IPR003439">
    <property type="entry name" value="ABC_transporter-like_ATP-bd"/>
</dbReference>
<dbReference type="InterPro" id="IPR017871">
    <property type="entry name" value="ABC_transporter-like_CS"/>
</dbReference>
<dbReference type="InterPro" id="IPR027417">
    <property type="entry name" value="P-loop_NTPase"/>
</dbReference>
<dbReference type="InterPro" id="IPR039421">
    <property type="entry name" value="Type_1_exporter"/>
</dbReference>
<dbReference type="PANTHER" id="PTHR43394:SF1">
    <property type="entry name" value="ATP-BINDING CASSETTE SUB-FAMILY B MEMBER 10, MITOCHONDRIAL"/>
    <property type="match status" value="1"/>
</dbReference>
<dbReference type="PANTHER" id="PTHR43394">
    <property type="entry name" value="ATP-DEPENDENT PERMEASE MDL1, MITOCHONDRIAL"/>
    <property type="match status" value="1"/>
</dbReference>
<dbReference type="Pfam" id="PF00664">
    <property type="entry name" value="ABC_membrane"/>
    <property type="match status" value="2"/>
</dbReference>
<dbReference type="Pfam" id="PF00005">
    <property type="entry name" value="ABC_tran"/>
    <property type="match status" value="2"/>
</dbReference>
<dbReference type="SMART" id="SM00382">
    <property type="entry name" value="AAA"/>
    <property type="match status" value="2"/>
</dbReference>
<dbReference type="SUPFAM" id="SSF90123">
    <property type="entry name" value="ABC transporter transmembrane region"/>
    <property type="match status" value="2"/>
</dbReference>
<dbReference type="SUPFAM" id="SSF52540">
    <property type="entry name" value="P-loop containing nucleoside triphosphate hydrolases"/>
    <property type="match status" value="2"/>
</dbReference>
<dbReference type="PROSITE" id="PS50929">
    <property type="entry name" value="ABC_TM1F"/>
    <property type="match status" value="2"/>
</dbReference>
<dbReference type="PROSITE" id="PS00211">
    <property type="entry name" value="ABC_TRANSPORTER_1"/>
    <property type="match status" value="2"/>
</dbReference>
<dbReference type="PROSITE" id="PS50893">
    <property type="entry name" value="ABC_TRANSPORTER_2"/>
    <property type="match status" value="2"/>
</dbReference>